<comment type="function">
    <text evidence="1">Catalyzes the 2-thiolation of uridine at the wobble position (U34) of tRNA, leading to the formation of s(2)U34.</text>
</comment>
<comment type="catalytic activity">
    <reaction evidence="1">
        <text>S-sulfanyl-L-cysteinyl-[protein] + uridine(34) in tRNA + AH2 + ATP = 2-thiouridine(34) in tRNA + L-cysteinyl-[protein] + A + AMP + diphosphate + H(+)</text>
        <dbReference type="Rhea" id="RHEA:47032"/>
        <dbReference type="Rhea" id="RHEA-COMP:10131"/>
        <dbReference type="Rhea" id="RHEA-COMP:11726"/>
        <dbReference type="Rhea" id="RHEA-COMP:11727"/>
        <dbReference type="Rhea" id="RHEA-COMP:11728"/>
        <dbReference type="ChEBI" id="CHEBI:13193"/>
        <dbReference type="ChEBI" id="CHEBI:15378"/>
        <dbReference type="ChEBI" id="CHEBI:17499"/>
        <dbReference type="ChEBI" id="CHEBI:29950"/>
        <dbReference type="ChEBI" id="CHEBI:30616"/>
        <dbReference type="ChEBI" id="CHEBI:33019"/>
        <dbReference type="ChEBI" id="CHEBI:61963"/>
        <dbReference type="ChEBI" id="CHEBI:65315"/>
        <dbReference type="ChEBI" id="CHEBI:87170"/>
        <dbReference type="ChEBI" id="CHEBI:456215"/>
        <dbReference type="EC" id="2.8.1.13"/>
    </reaction>
</comment>
<comment type="subcellular location">
    <subcellularLocation>
        <location evidence="1">Cytoplasm</location>
    </subcellularLocation>
</comment>
<comment type="similarity">
    <text evidence="1">Belongs to the MnmA/TRMU family.</text>
</comment>
<evidence type="ECO:0000255" key="1">
    <source>
        <dbReference type="HAMAP-Rule" id="MF_00144"/>
    </source>
</evidence>
<protein>
    <recommendedName>
        <fullName evidence="1">tRNA-specific 2-thiouridylase MnmA</fullName>
        <ecNumber evidence="1">2.8.1.13</ecNumber>
    </recommendedName>
</protein>
<gene>
    <name evidence="1" type="primary">mnmA</name>
    <name type="ordered locus">lpl1340</name>
</gene>
<feature type="chain" id="PRO_0000349679" description="tRNA-specific 2-thiouridylase MnmA">
    <location>
        <begin position="1"/>
        <end position="361"/>
    </location>
</feature>
<feature type="region of interest" description="Interaction with target base in tRNA" evidence="1">
    <location>
        <begin position="94"/>
        <end position="96"/>
    </location>
</feature>
<feature type="region of interest" description="Interaction with tRNA" evidence="1">
    <location>
        <begin position="145"/>
        <end position="147"/>
    </location>
</feature>
<feature type="region of interest" description="Interaction with tRNA" evidence="1">
    <location>
        <begin position="307"/>
        <end position="308"/>
    </location>
</feature>
<feature type="active site" description="Nucleophile" evidence="1">
    <location>
        <position position="99"/>
    </location>
</feature>
<feature type="active site" description="Cysteine persulfide intermediate" evidence="1">
    <location>
        <position position="195"/>
    </location>
</feature>
<feature type="binding site" evidence="1">
    <location>
        <begin position="8"/>
        <end position="15"/>
    </location>
    <ligand>
        <name>ATP</name>
        <dbReference type="ChEBI" id="CHEBI:30616"/>
    </ligand>
</feature>
<feature type="binding site" evidence="1">
    <location>
        <position position="34"/>
    </location>
    <ligand>
        <name>ATP</name>
        <dbReference type="ChEBI" id="CHEBI:30616"/>
    </ligand>
</feature>
<feature type="binding site" evidence="1">
    <location>
        <position position="123"/>
    </location>
    <ligand>
        <name>ATP</name>
        <dbReference type="ChEBI" id="CHEBI:30616"/>
    </ligand>
</feature>
<feature type="site" description="Interaction with tRNA" evidence="1">
    <location>
        <position position="124"/>
    </location>
</feature>
<feature type="site" description="Interaction with tRNA" evidence="1">
    <location>
        <position position="340"/>
    </location>
</feature>
<feature type="disulfide bond" description="Alternate" evidence="1">
    <location>
        <begin position="99"/>
        <end position="195"/>
    </location>
</feature>
<proteinExistence type="inferred from homology"/>
<keyword id="KW-0067">ATP-binding</keyword>
<keyword id="KW-0963">Cytoplasm</keyword>
<keyword id="KW-1015">Disulfide bond</keyword>
<keyword id="KW-0547">Nucleotide-binding</keyword>
<keyword id="KW-0694">RNA-binding</keyword>
<keyword id="KW-0808">Transferase</keyword>
<keyword id="KW-0819">tRNA processing</keyword>
<keyword id="KW-0820">tRNA-binding</keyword>
<name>MNMA_LEGPL</name>
<organism>
    <name type="scientific">Legionella pneumophila (strain Lens)</name>
    <dbReference type="NCBI Taxonomy" id="297245"/>
    <lineage>
        <taxon>Bacteria</taxon>
        <taxon>Pseudomonadati</taxon>
        <taxon>Pseudomonadota</taxon>
        <taxon>Gammaproteobacteria</taxon>
        <taxon>Legionellales</taxon>
        <taxon>Legionellaceae</taxon>
        <taxon>Legionella</taxon>
    </lineage>
</organism>
<reference key="1">
    <citation type="journal article" date="2004" name="Nat. Genet.">
        <title>Evidence in the Legionella pneumophila genome for exploitation of host cell functions and high genome plasticity.</title>
        <authorList>
            <person name="Cazalet C."/>
            <person name="Rusniok C."/>
            <person name="Brueggemann H."/>
            <person name="Zidane N."/>
            <person name="Magnier A."/>
            <person name="Ma L."/>
            <person name="Tichit M."/>
            <person name="Jarraud S."/>
            <person name="Bouchier C."/>
            <person name="Vandenesch F."/>
            <person name="Kunst F."/>
            <person name="Etienne J."/>
            <person name="Glaser P."/>
            <person name="Buchrieser C."/>
        </authorList>
    </citation>
    <scope>NUCLEOTIDE SEQUENCE [LARGE SCALE GENOMIC DNA]</scope>
    <source>
        <strain>Lens</strain>
    </source>
</reference>
<dbReference type="EC" id="2.8.1.13" evidence="1"/>
<dbReference type="EMBL" id="CR628337">
    <property type="protein sequence ID" value="CAH15580.1"/>
    <property type="molecule type" value="Genomic_DNA"/>
</dbReference>
<dbReference type="RefSeq" id="WP_011215408.1">
    <property type="nucleotide sequence ID" value="NC_006369.1"/>
</dbReference>
<dbReference type="SMR" id="Q5WWV9"/>
<dbReference type="KEGG" id="lpf:lpl1340"/>
<dbReference type="LegioList" id="lpl1340"/>
<dbReference type="HOGENOM" id="CLU_035188_1_0_6"/>
<dbReference type="Proteomes" id="UP000002517">
    <property type="component" value="Chromosome"/>
</dbReference>
<dbReference type="GO" id="GO:0005737">
    <property type="term" value="C:cytoplasm"/>
    <property type="evidence" value="ECO:0007669"/>
    <property type="project" value="UniProtKB-SubCell"/>
</dbReference>
<dbReference type="GO" id="GO:0005524">
    <property type="term" value="F:ATP binding"/>
    <property type="evidence" value="ECO:0007669"/>
    <property type="project" value="UniProtKB-KW"/>
</dbReference>
<dbReference type="GO" id="GO:0000049">
    <property type="term" value="F:tRNA binding"/>
    <property type="evidence" value="ECO:0007669"/>
    <property type="project" value="UniProtKB-KW"/>
</dbReference>
<dbReference type="GO" id="GO:0103016">
    <property type="term" value="F:tRNA-uridine 2-sulfurtransferase activity"/>
    <property type="evidence" value="ECO:0007669"/>
    <property type="project" value="UniProtKB-EC"/>
</dbReference>
<dbReference type="GO" id="GO:0002143">
    <property type="term" value="P:tRNA wobble position uridine thiolation"/>
    <property type="evidence" value="ECO:0007669"/>
    <property type="project" value="TreeGrafter"/>
</dbReference>
<dbReference type="CDD" id="cd01998">
    <property type="entry name" value="MnmA_TRMU-like"/>
    <property type="match status" value="1"/>
</dbReference>
<dbReference type="FunFam" id="2.30.30.280:FF:000001">
    <property type="entry name" value="tRNA-specific 2-thiouridylase MnmA"/>
    <property type="match status" value="1"/>
</dbReference>
<dbReference type="FunFam" id="2.40.30.10:FF:000023">
    <property type="entry name" value="tRNA-specific 2-thiouridylase MnmA"/>
    <property type="match status" value="1"/>
</dbReference>
<dbReference type="FunFam" id="3.40.50.620:FF:000004">
    <property type="entry name" value="tRNA-specific 2-thiouridylase MnmA"/>
    <property type="match status" value="1"/>
</dbReference>
<dbReference type="Gene3D" id="2.30.30.280">
    <property type="entry name" value="Adenine nucleotide alpha hydrolases-like domains"/>
    <property type="match status" value="1"/>
</dbReference>
<dbReference type="Gene3D" id="3.40.50.620">
    <property type="entry name" value="HUPs"/>
    <property type="match status" value="1"/>
</dbReference>
<dbReference type="Gene3D" id="2.40.30.10">
    <property type="entry name" value="Translation factors"/>
    <property type="match status" value="1"/>
</dbReference>
<dbReference type="HAMAP" id="MF_00144">
    <property type="entry name" value="tRNA_thiouridyl_MnmA"/>
    <property type="match status" value="1"/>
</dbReference>
<dbReference type="InterPro" id="IPR004506">
    <property type="entry name" value="MnmA-like"/>
</dbReference>
<dbReference type="InterPro" id="IPR046885">
    <property type="entry name" value="MnmA-like_C"/>
</dbReference>
<dbReference type="InterPro" id="IPR046884">
    <property type="entry name" value="MnmA-like_central"/>
</dbReference>
<dbReference type="InterPro" id="IPR023382">
    <property type="entry name" value="MnmA-like_central_sf"/>
</dbReference>
<dbReference type="InterPro" id="IPR014729">
    <property type="entry name" value="Rossmann-like_a/b/a_fold"/>
</dbReference>
<dbReference type="NCBIfam" id="NF001138">
    <property type="entry name" value="PRK00143.1"/>
    <property type="match status" value="1"/>
</dbReference>
<dbReference type="NCBIfam" id="TIGR00420">
    <property type="entry name" value="trmU"/>
    <property type="match status" value="1"/>
</dbReference>
<dbReference type="PANTHER" id="PTHR11933:SF5">
    <property type="entry name" value="MITOCHONDRIAL TRNA-SPECIFIC 2-THIOURIDYLASE 1"/>
    <property type="match status" value="1"/>
</dbReference>
<dbReference type="PANTHER" id="PTHR11933">
    <property type="entry name" value="TRNA 5-METHYLAMINOMETHYL-2-THIOURIDYLATE -METHYLTRANSFERASE"/>
    <property type="match status" value="1"/>
</dbReference>
<dbReference type="Pfam" id="PF03054">
    <property type="entry name" value="tRNA_Me_trans"/>
    <property type="match status" value="1"/>
</dbReference>
<dbReference type="Pfam" id="PF20258">
    <property type="entry name" value="tRNA_Me_trans_C"/>
    <property type="match status" value="1"/>
</dbReference>
<dbReference type="Pfam" id="PF20259">
    <property type="entry name" value="tRNA_Me_trans_M"/>
    <property type="match status" value="1"/>
</dbReference>
<dbReference type="SUPFAM" id="SSF52402">
    <property type="entry name" value="Adenine nucleotide alpha hydrolases-like"/>
    <property type="match status" value="1"/>
</dbReference>
<accession>Q5WWV9</accession>
<sequence>MKAKVIVGMSGGVDSSVAAWLLKEQGYQVEGLFMKNWEQDDHNDYCPAAKDLADAQAVCNQLRIPLHTVNFSKEYWDRVFAYFLSEYEKGRTPNPDVLCNKEIKFNAFLNYALTLGADYIATGHYAKNTIEGSIGYLFKAKDREKDQTYFLHAVEPEALSKTIFPIGDFTKPQIREFAKQLGLVTHAKKDSTGICFIGEKRFKTFLNEFILAKPGDIKSTGGKTLGQHDGLMFYTLGQRQGLGIGGLQNSTDEPWYVVDKDIASNTLYVAQGSQHPMLYSQGLICGPIHWLADYENHLPLTCFAKTRYRQTDQACMISPPDNNQHYVMFSNPQRAITPGQFIVFYEKNQCLGGATIEQIIR</sequence>